<comment type="function">
    <text evidence="2 8 9">Ubiquitin-binding autophagy adapter that participates in different processes including host defense or intracellular homeostasis (PubMed:31916398, PubMed:34374750). Possesses a double function during the selective autophagy by acting as a shuttle bringing ubiquitinated proteins to autophagosomes and also by participating in the formation of protein aggregates. Plays a role in the regulation of the innate immune response by modulating type I interferon production and targeting ubiquitinated IRF3 for autophagic degradation (By similarity). In response to oxidative stress, promotes an increase in SQSTM1 levels, phosphorylation, and body formation by preventing its autophagic degradation (PubMed:31916398). In turn, activates the KEAP1-NRF2/NFE2L2 antioxidant pathway (PubMed:31916398). Also plays non-autophagy role by mediating the shuttle of IL-12 to late endosome for subsequent secretion (PubMed:34374750).</text>
</comment>
<comment type="subunit">
    <text evidence="3 9">Homooligomer and heterooligomer. Interacts with TRIM55 (By similarity). Interacts with titin/TTN (By similarity). Interacts with RNF29, USP8, MAP1LC3A, MAP1LC3B, MAP1LC3C, GABARAP, GABARAPL1 and GABARAPL2. Binds to ubiquitin and ubiquitinated proteins. Interacts with SQSTM1. Interacts with TAX1BP1. Interacts with IRF3; this interaction mediates autophagic degradation of IRF3 (By similarity). Interacts with IL12A and IL12B (PubMed:34374750).</text>
</comment>
<comment type="interaction">
    <interactant intactId="EBI-642554">
        <id>P97432</id>
    </interactant>
    <interactant intactId="EBI-373144">
        <id>Q9GZQ8</id>
        <label>MAP1LC3B</label>
    </interactant>
    <organismsDiffer>true</organismsDiffer>
    <experiments>2</experiments>
</comment>
<comment type="subcellular location">
    <subcellularLocation>
        <location evidence="8">Cytoplasm</location>
    </subcellularLocation>
    <subcellularLocation>
        <location evidence="2">Cytoplasmic vesicle</location>
        <location evidence="2">Autophagosome</location>
    </subcellularLocation>
    <subcellularLocation>
        <location evidence="2">Lysosome</location>
    </subcellularLocation>
    <subcellularLocation>
        <location evidence="3">Cytoplasm</location>
        <location evidence="3">Myofibril</location>
        <location evidence="3">Sarcomere</location>
        <location evidence="3">M line</location>
    </subcellularLocation>
    <text evidence="2 3 8">In cardiac muscles localizes to the sarcomeric M line (By similarity). Is targeted to lysosomes for degradation (By similarity).</text>
</comment>
<comment type="tissue specificity">
    <text>Expressed in brain.</text>
</comment>
<comment type="induction">
    <text evidence="8">In response to oxidative stress.</text>
</comment>
<comment type="domain">
    <text evidence="1">The PB1 domain mediates interaction with SQSTM1.</text>
</comment>
<comment type="PTM">
    <text evidence="2">Phosphorylated by GSK3A; this phosphorylation inhibits NBR1 involvement in the formation of ubiquitinated protein aggregates.</text>
</comment>
<comment type="disruption phenotype">
    <text evidence="9">NBR1-conditional knockout mice are not affected concerning general autophagy. However, the deletion results in a slight but significant reduction on the number and size of SQSTM1 liquid droplets.</text>
</comment>
<dbReference type="EMBL" id="U73039">
    <property type="protein sequence ID" value="AAC53025.1"/>
    <property type="molecule type" value="mRNA"/>
</dbReference>
<dbReference type="EMBL" id="AF227188">
    <property type="protein sequence ID" value="AAF74118.1"/>
    <property type="molecule type" value="mRNA"/>
</dbReference>
<dbReference type="CCDS" id="CCDS25475.1"/>
<dbReference type="RefSeq" id="NP_001239149.1">
    <property type="nucleotide sequence ID" value="NM_001252220.1"/>
</dbReference>
<dbReference type="RefSeq" id="NP_032702.1">
    <property type="nucleotide sequence ID" value="NM_008676.3"/>
</dbReference>
<dbReference type="SMR" id="P97432"/>
<dbReference type="BioGRID" id="201698">
    <property type="interactions" value="16"/>
</dbReference>
<dbReference type="FunCoup" id="P97432">
    <property type="interactions" value="3281"/>
</dbReference>
<dbReference type="IntAct" id="P97432">
    <property type="interactions" value="8"/>
</dbReference>
<dbReference type="MINT" id="P97432"/>
<dbReference type="STRING" id="10090.ENSMUSP00000099388"/>
<dbReference type="iPTMnet" id="P97432"/>
<dbReference type="PhosphoSitePlus" id="P97432"/>
<dbReference type="PaxDb" id="10090-ENSMUSP00000099388"/>
<dbReference type="ProteomicsDB" id="252646"/>
<dbReference type="Pumba" id="P97432"/>
<dbReference type="Antibodypedia" id="8116">
    <property type="antibodies" value="309 antibodies from 33 providers"/>
</dbReference>
<dbReference type="DNASU" id="17966"/>
<dbReference type="Ensembl" id="ENSMUST00000103098.9">
    <property type="protein sequence ID" value="ENSMUSP00000099387.3"/>
    <property type="gene ID" value="ENSMUSG00000017119.21"/>
</dbReference>
<dbReference type="Ensembl" id="ENSMUST00000103099.8">
    <property type="protein sequence ID" value="ENSMUSP00000099388.2"/>
    <property type="gene ID" value="ENSMUSG00000017119.21"/>
</dbReference>
<dbReference type="Ensembl" id="ENSMUST00000107218.10">
    <property type="protein sequence ID" value="ENSMUSP00000102836.4"/>
    <property type="gene ID" value="ENSMUSG00000017119.21"/>
</dbReference>
<dbReference type="GeneID" id="17966"/>
<dbReference type="KEGG" id="mmu:17966"/>
<dbReference type="UCSC" id="uc007lpg.2">
    <property type="organism name" value="mouse"/>
</dbReference>
<dbReference type="AGR" id="MGI:108498"/>
<dbReference type="CTD" id="4077"/>
<dbReference type="MGI" id="MGI:108498">
    <property type="gene designation" value="Nbr1"/>
</dbReference>
<dbReference type="VEuPathDB" id="HostDB:ENSMUSG00000017119"/>
<dbReference type="eggNOG" id="KOG4351">
    <property type="taxonomic scope" value="Eukaryota"/>
</dbReference>
<dbReference type="eggNOG" id="KOG4582">
    <property type="taxonomic scope" value="Eukaryota"/>
</dbReference>
<dbReference type="GeneTree" id="ENSGT00390000016335"/>
<dbReference type="InParanoid" id="P97432"/>
<dbReference type="OMA" id="SHWRLTQ"/>
<dbReference type="OrthoDB" id="661148at2759"/>
<dbReference type="PhylomeDB" id="P97432"/>
<dbReference type="TreeFam" id="TF328428"/>
<dbReference type="Reactome" id="R-MMU-9664873">
    <property type="pathway name" value="Pexophagy"/>
</dbReference>
<dbReference type="BioGRID-ORCS" id="17966">
    <property type="hits" value="12 hits in 76 CRISPR screens"/>
</dbReference>
<dbReference type="ChiTaRS" id="Nbr1">
    <property type="organism name" value="mouse"/>
</dbReference>
<dbReference type="PRO" id="PR:P97432"/>
<dbReference type="Proteomes" id="UP000000589">
    <property type="component" value="Chromosome 11"/>
</dbReference>
<dbReference type="RNAct" id="P97432">
    <property type="molecule type" value="protein"/>
</dbReference>
<dbReference type="Bgee" id="ENSMUSG00000017119">
    <property type="expression patterns" value="Expressed in ciliary body and 267 other cell types or tissues"/>
</dbReference>
<dbReference type="ExpressionAtlas" id="P97432">
    <property type="expression patterns" value="baseline and differential"/>
</dbReference>
<dbReference type="GO" id="GO:0005776">
    <property type="term" value="C:autophagosome"/>
    <property type="evidence" value="ECO:0007669"/>
    <property type="project" value="UniProtKB-SubCell"/>
</dbReference>
<dbReference type="GO" id="GO:0005829">
    <property type="term" value="C:cytosol"/>
    <property type="evidence" value="ECO:0000250"/>
    <property type="project" value="UniProtKB"/>
</dbReference>
<dbReference type="GO" id="GO:0005770">
    <property type="term" value="C:late endosome"/>
    <property type="evidence" value="ECO:0000314"/>
    <property type="project" value="UniProtKB"/>
</dbReference>
<dbReference type="GO" id="GO:0005764">
    <property type="term" value="C:lysosome"/>
    <property type="evidence" value="ECO:0007669"/>
    <property type="project" value="UniProtKB-SubCell"/>
</dbReference>
<dbReference type="GO" id="GO:0031430">
    <property type="term" value="C:M band"/>
    <property type="evidence" value="ECO:0007669"/>
    <property type="project" value="UniProtKB-SubCell"/>
</dbReference>
<dbReference type="GO" id="GO:0005758">
    <property type="term" value="C:mitochondrial intermembrane space"/>
    <property type="evidence" value="ECO:0000314"/>
    <property type="project" value="MGI"/>
</dbReference>
<dbReference type="GO" id="GO:0016604">
    <property type="term" value="C:nuclear body"/>
    <property type="evidence" value="ECO:0007669"/>
    <property type="project" value="Ensembl"/>
</dbReference>
<dbReference type="GO" id="GO:0005778">
    <property type="term" value="C:peroxisomal membrane"/>
    <property type="evidence" value="ECO:0000304"/>
    <property type="project" value="Reactome"/>
</dbReference>
<dbReference type="GO" id="GO:0000407">
    <property type="term" value="C:phagophore assembly site"/>
    <property type="evidence" value="ECO:0000314"/>
    <property type="project" value="MGI"/>
</dbReference>
<dbReference type="GO" id="GO:0043235">
    <property type="term" value="C:receptor complex"/>
    <property type="evidence" value="ECO:0000250"/>
    <property type="project" value="UniProtKB"/>
</dbReference>
<dbReference type="GO" id="GO:0051019">
    <property type="term" value="F:mitogen-activated protein kinase binding"/>
    <property type="evidence" value="ECO:0000314"/>
    <property type="project" value="BHF-UCL"/>
</dbReference>
<dbReference type="GO" id="GO:0043130">
    <property type="term" value="F:ubiquitin binding"/>
    <property type="evidence" value="ECO:0000250"/>
    <property type="project" value="UniProtKB"/>
</dbReference>
<dbReference type="GO" id="GO:0008270">
    <property type="term" value="F:zinc ion binding"/>
    <property type="evidence" value="ECO:0007669"/>
    <property type="project" value="UniProtKB-KW"/>
</dbReference>
<dbReference type="GO" id="GO:0016236">
    <property type="term" value="P:macroautophagy"/>
    <property type="evidence" value="ECO:0000250"/>
    <property type="project" value="UniProtKB"/>
</dbReference>
<dbReference type="GO" id="GO:0045668">
    <property type="term" value="P:negative regulation of osteoblast differentiation"/>
    <property type="evidence" value="ECO:0000315"/>
    <property type="project" value="BHF-UCL"/>
</dbReference>
<dbReference type="GO" id="GO:0030500">
    <property type="term" value="P:regulation of bone mineralization"/>
    <property type="evidence" value="ECO:0000315"/>
    <property type="project" value="BHF-UCL"/>
</dbReference>
<dbReference type="GO" id="GO:0032872">
    <property type="term" value="P:regulation of stress-activated MAPK cascade"/>
    <property type="evidence" value="ECO:0000315"/>
    <property type="project" value="BHF-UCL"/>
</dbReference>
<dbReference type="CDD" id="cd14947">
    <property type="entry name" value="NBR1_like"/>
    <property type="match status" value="1"/>
</dbReference>
<dbReference type="CDD" id="cd06396">
    <property type="entry name" value="PB1_NBR1"/>
    <property type="match status" value="1"/>
</dbReference>
<dbReference type="CDD" id="cd14319">
    <property type="entry name" value="UBA_NBR1"/>
    <property type="match status" value="1"/>
</dbReference>
<dbReference type="CDD" id="cd02340">
    <property type="entry name" value="ZZ_NBR1_like"/>
    <property type="match status" value="1"/>
</dbReference>
<dbReference type="FunFam" id="1.10.8.10:FF:000033">
    <property type="entry name" value="Next to BRCA1 gene 1 protein"/>
    <property type="match status" value="1"/>
</dbReference>
<dbReference type="FunFam" id="3.10.20.90:FF:000292">
    <property type="entry name" value="Next to BRCA1 gene 1 protein"/>
    <property type="match status" value="1"/>
</dbReference>
<dbReference type="FunFam" id="3.30.60.90:FF:000007">
    <property type="entry name" value="Next to BRCA1 gene 1 protein"/>
    <property type="match status" value="1"/>
</dbReference>
<dbReference type="FunFam" id="2.60.40.10:FF:000199">
    <property type="entry name" value="next to BRCA1 gene 1 protein-like"/>
    <property type="match status" value="1"/>
</dbReference>
<dbReference type="Gene3D" id="3.30.60.90">
    <property type="match status" value="1"/>
</dbReference>
<dbReference type="Gene3D" id="1.10.8.10">
    <property type="entry name" value="DNA helicase RuvA subunit, C-terminal domain"/>
    <property type="match status" value="1"/>
</dbReference>
<dbReference type="Gene3D" id="2.60.40.10">
    <property type="entry name" value="Immunoglobulins"/>
    <property type="match status" value="1"/>
</dbReference>
<dbReference type="Gene3D" id="3.10.20.90">
    <property type="entry name" value="Phosphatidylinositol 3-kinase Catalytic Subunit, Chain A, domain 1"/>
    <property type="match status" value="1"/>
</dbReference>
<dbReference type="InterPro" id="IPR013783">
    <property type="entry name" value="Ig-like_fold"/>
</dbReference>
<dbReference type="InterPro" id="IPR032350">
    <property type="entry name" value="N_BRCA1_central"/>
</dbReference>
<dbReference type="InterPro" id="IPR053793">
    <property type="entry name" value="PB1-like"/>
</dbReference>
<dbReference type="InterPro" id="IPR000270">
    <property type="entry name" value="PB1_dom"/>
</dbReference>
<dbReference type="InterPro" id="IPR034852">
    <property type="entry name" value="PB1_NBR1"/>
</dbReference>
<dbReference type="InterPro" id="IPR015940">
    <property type="entry name" value="UBA"/>
</dbReference>
<dbReference type="InterPro" id="IPR009060">
    <property type="entry name" value="UBA-like_sf"/>
</dbReference>
<dbReference type="InterPro" id="IPR056893">
    <property type="entry name" value="UBA_NBR1_C"/>
</dbReference>
<dbReference type="InterPro" id="IPR000433">
    <property type="entry name" value="Znf_ZZ"/>
</dbReference>
<dbReference type="InterPro" id="IPR043145">
    <property type="entry name" value="Znf_ZZ_sf"/>
</dbReference>
<dbReference type="PANTHER" id="PTHR20930:SF2">
    <property type="entry name" value="NEXT TO BRCA1 GENE 1 PROTEIN"/>
    <property type="match status" value="1"/>
</dbReference>
<dbReference type="PANTHER" id="PTHR20930">
    <property type="entry name" value="OVARIAN CARCINOMA ANTIGEN CA125-RELATED"/>
    <property type="match status" value="1"/>
</dbReference>
<dbReference type="Pfam" id="PF16158">
    <property type="entry name" value="N_BRCA1_IG"/>
    <property type="match status" value="1"/>
</dbReference>
<dbReference type="Pfam" id="PF00564">
    <property type="entry name" value="PB1"/>
    <property type="match status" value="1"/>
</dbReference>
<dbReference type="Pfam" id="PF24932">
    <property type="entry name" value="UBA_NBR1_C"/>
    <property type="match status" value="1"/>
</dbReference>
<dbReference type="Pfam" id="PF00569">
    <property type="entry name" value="ZZ"/>
    <property type="match status" value="1"/>
</dbReference>
<dbReference type="SMART" id="SM00666">
    <property type="entry name" value="PB1"/>
    <property type="match status" value="1"/>
</dbReference>
<dbReference type="SMART" id="SM00291">
    <property type="entry name" value="ZnF_ZZ"/>
    <property type="match status" value="1"/>
</dbReference>
<dbReference type="SUPFAM" id="SSF54277">
    <property type="entry name" value="CAD &amp; PB1 domains"/>
    <property type="match status" value="1"/>
</dbReference>
<dbReference type="SUPFAM" id="SSF57850">
    <property type="entry name" value="RING/U-box"/>
    <property type="match status" value="1"/>
</dbReference>
<dbReference type="SUPFAM" id="SSF46934">
    <property type="entry name" value="UBA-like"/>
    <property type="match status" value="1"/>
</dbReference>
<dbReference type="PROSITE" id="PS51745">
    <property type="entry name" value="PB1"/>
    <property type="match status" value="1"/>
</dbReference>
<dbReference type="PROSITE" id="PS50030">
    <property type="entry name" value="UBA"/>
    <property type="match status" value="1"/>
</dbReference>
<dbReference type="PROSITE" id="PS01357">
    <property type="entry name" value="ZF_ZZ_1"/>
    <property type="match status" value="1"/>
</dbReference>
<dbReference type="PROSITE" id="PS50135">
    <property type="entry name" value="ZF_ZZ_2"/>
    <property type="match status" value="1"/>
</dbReference>
<name>NBR1_MOUSE</name>
<feature type="chain" id="PRO_0000096747" description="Next to BRCA1 gene 1 protein">
    <location>
        <begin position="1"/>
        <end position="988"/>
    </location>
</feature>
<feature type="domain" description="PB1" evidence="6">
    <location>
        <begin position="4"/>
        <end position="86"/>
    </location>
</feature>
<feature type="domain" description="UBA" evidence="4">
    <location>
        <begin position="935"/>
        <end position="979"/>
    </location>
</feature>
<feature type="zinc finger region" description="ZZ-type" evidence="5">
    <location>
        <begin position="213"/>
        <end position="265"/>
    </location>
</feature>
<feature type="region of interest" description="Disordered" evidence="7">
    <location>
        <begin position="126"/>
        <end position="150"/>
    </location>
</feature>
<feature type="region of interest" description="ATG8 family proteins-binding" evidence="1">
    <location>
        <begin position="543"/>
        <end position="637"/>
    </location>
</feature>
<feature type="region of interest" description="Disordered" evidence="7">
    <location>
        <begin position="611"/>
        <end position="644"/>
    </location>
</feature>
<feature type="region of interest" description="ATG8 family proteins-binding" evidence="1">
    <location>
        <begin position="745"/>
        <end position="756"/>
    </location>
</feature>
<feature type="region of interest" description="Disordered" evidence="7">
    <location>
        <begin position="768"/>
        <end position="822"/>
    </location>
</feature>
<feature type="region of interest" description="Disordered" evidence="7">
    <location>
        <begin position="841"/>
        <end position="900"/>
    </location>
</feature>
<feature type="compositionally biased region" description="Basic and acidic residues" evidence="7">
    <location>
        <begin position="795"/>
        <end position="807"/>
    </location>
</feature>
<feature type="compositionally biased region" description="Polar residues" evidence="7">
    <location>
        <begin position="808"/>
        <end position="822"/>
    </location>
</feature>
<feature type="binding site" evidence="5">
    <location>
        <position position="218"/>
    </location>
    <ligand>
        <name>Zn(2+)</name>
        <dbReference type="ChEBI" id="CHEBI:29105"/>
        <label>1</label>
    </ligand>
</feature>
<feature type="binding site" evidence="5">
    <location>
        <position position="221"/>
    </location>
    <ligand>
        <name>Zn(2+)</name>
        <dbReference type="ChEBI" id="CHEBI:29105"/>
        <label>1</label>
    </ligand>
</feature>
<feature type="binding site" evidence="5">
    <location>
        <position position="232"/>
    </location>
    <ligand>
        <name>Zn(2+)</name>
        <dbReference type="ChEBI" id="CHEBI:29105"/>
        <label>2</label>
    </ligand>
</feature>
<feature type="binding site" evidence="5">
    <location>
        <position position="235"/>
    </location>
    <ligand>
        <name>Zn(2+)</name>
        <dbReference type="ChEBI" id="CHEBI:29105"/>
        <label>2</label>
    </ligand>
</feature>
<feature type="binding site" evidence="5">
    <location>
        <position position="241"/>
    </location>
    <ligand>
        <name>Zn(2+)</name>
        <dbReference type="ChEBI" id="CHEBI:29105"/>
        <label>1</label>
    </ligand>
</feature>
<feature type="binding site" evidence="5">
    <location>
        <position position="244"/>
    </location>
    <ligand>
        <name>Zn(2+)</name>
        <dbReference type="ChEBI" id="CHEBI:29105"/>
        <label>1</label>
    </ligand>
</feature>
<feature type="binding site" evidence="5">
    <location>
        <position position="251"/>
    </location>
    <ligand>
        <name>Zn(2+)</name>
        <dbReference type="ChEBI" id="CHEBI:29105"/>
        <label>2</label>
    </ligand>
</feature>
<feature type="binding site" evidence="5">
    <location>
        <position position="255"/>
    </location>
    <ligand>
        <name>Zn(2+)</name>
        <dbReference type="ChEBI" id="CHEBI:29105"/>
        <label>2</label>
    </ligand>
</feature>
<feature type="modified residue" description="Phosphoserine" evidence="2">
    <location>
        <position position="117"/>
    </location>
</feature>
<feature type="modified residue" description="Phosphothreonine" evidence="2">
    <location>
        <position position="587"/>
    </location>
</feature>
<feature type="modified residue" description="Phosphoserine" evidence="3">
    <location>
        <position position="591"/>
    </location>
</feature>
<feature type="modified residue" description="Phosphoserine" evidence="3">
    <location>
        <position position="597"/>
    </location>
</feature>
<feature type="modified residue" description="Phosphoserine" evidence="2">
    <location>
        <position position="626"/>
    </location>
</feature>
<feature type="modified residue" description="Phosphoserine" evidence="3">
    <location>
        <position position="860"/>
    </location>
</feature>
<feature type="sequence conflict" description="In Ref. 2; AAF74118." evidence="10" ref="2">
    <original>Q</original>
    <variation>R</variation>
    <location>
        <position position="807"/>
    </location>
</feature>
<reference key="1">
    <citation type="journal article" date="1996" name="Genomics">
        <title>Isolation of the murine Nbr1 gene adjacent to the murine Brca1 gene.</title>
        <authorList>
            <person name="Chambers J.A."/>
            <person name="Solomon E."/>
        </authorList>
    </citation>
    <scope>NUCLEOTIDE SEQUENCE [MRNA]</scope>
    <source>
        <strain>ICR</strain>
        <tissue>Brain</tissue>
    </source>
</reference>
<reference key="2">
    <citation type="journal article" date="2001" name="Gene">
        <title>Expression profiles and intergenic structure of head-to-head oriented Brca1 and Nbr1 genes.</title>
        <authorList>
            <person name="Dimitrov S."/>
            <person name="Brennerova M."/>
            <person name="Forejt J."/>
        </authorList>
    </citation>
    <scope>NUCLEOTIDE SEQUENCE [MRNA]</scope>
    <source>
        <strain>129/Sv</strain>
        <tissue>Testis</tissue>
    </source>
</reference>
<reference key="3">
    <citation type="journal article" date="2010" name="Cell">
        <title>A tissue-specific atlas of mouse protein phosphorylation and expression.</title>
        <authorList>
            <person name="Huttlin E.L."/>
            <person name="Jedrychowski M.P."/>
            <person name="Elias J.E."/>
            <person name="Goswami T."/>
            <person name="Rad R."/>
            <person name="Beausoleil S.A."/>
            <person name="Villen J."/>
            <person name="Haas W."/>
            <person name="Sowa M.E."/>
            <person name="Gygi S.P."/>
        </authorList>
    </citation>
    <scope>IDENTIFICATION BY MASS SPECTROMETRY [LARGE SCALE ANALYSIS]</scope>
    <source>
        <tissue>Pancreas</tissue>
    </source>
</reference>
<reference key="4">
    <citation type="journal article" date="2020" name="EMBO Rep.">
        <title>NBR1-mediated p62-liquid droplets enhance the Keap1-Nrf2 system.</title>
        <authorList>
            <person name="Sanchez-Martin P."/>
            <person name="Sou Y.S."/>
            <person name="Kageyama S."/>
            <person name="Koike M."/>
            <person name="Waguri S."/>
            <person name="Komatsu M."/>
        </authorList>
    </citation>
    <scope>FUNCTION</scope>
    <scope>DISRUPTION PHENOTYPE</scope>
    <scope>SUBCELLULAR LOCATION</scope>
    <scope>INDUCTION BY OXIDATIVE STRESS</scope>
    <scope>INTERACTION WITH SQSTM1</scope>
</reference>
<reference key="5">
    <citation type="journal article" date="2022" name="J. Crohns. Colitis.">
        <title>Non-autophagy Role of Atg5 and NBR1 in Unconventional Secretion of IL-12 Prevents Gut Dysbiosis and Inflammation.</title>
        <authorList>
            <person name="Merkley S.D."/>
            <person name="Goodfellow S.M."/>
            <person name="Guo Y."/>
            <person name="Wilton Z.E.R."/>
            <person name="Byrum J.R."/>
            <person name="Schwalm K.C."/>
            <person name="Dinwiddie D.L."/>
            <person name="Gullapalli R.R."/>
            <person name="Deretic V."/>
            <person name="Jimenez Hernandez A."/>
            <person name="Bradfute S.B."/>
            <person name="In J.G."/>
            <person name="Castillo E.F."/>
        </authorList>
    </citation>
    <scope>FUNCTION</scope>
    <scope>INTERACTION WITH IL12A AND IL12B</scope>
</reference>
<evidence type="ECO:0000250" key="1"/>
<evidence type="ECO:0000250" key="2">
    <source>
        <dbReference type="UniProtKB" id="Q14596"/>
    </source>
</evidence>
<evidence type="ECO:0000250" key="3">
    <source>
        <dbReference type="UniProtKB" id="Q501R9"/>
    </source>
</evidence>
<evidence type="ECO:0000255" key="4">
    <source>
        <dbReference type="PROSITE-ProRule" id="PRU00212"/>
    </source>
</evidence>
<evidence type="ECO:0000255" key="5">
    <source>
        <dbReference type="PROSITE-ProRule" id="PRU00228"/>
    </source>
</evidence>
<evidence type="ECO:0000255" key="6">
    <source>
        <dbReference type="PROSITE-ProRule" id="PRU01081"/>
    </source>
</evidence>
<evidence type="ECO:0000256" key="7">
    <source>
        <dbReference type="SAM" id="MobiDB-lite"/>
    </source>
</evidence>
<evidence type="ECO:0000269" key="8">
    <source>
    </source>
</evidence>
<evidence type="ECO:0000269" key="9">
    <source>
    </source>
</evidence>
<evidence type="ECO:0000305" key="10"/>
<organism>
    <name type="scientific">Mus musculus</name>
    <name type="common">Mouse</name>
    <dbReference type="NCBI Taxonomy" id="10090"/>
    <lineage>
        <taxon>Eukaryota</taxon>
        <taxon>Metazoa</taxon>
        <taxon>Chordata</taxon>
        <taxon>Craniata</taxon>
        <taxon>Vertebrata</taxon>
        <taxon>Euteleostomi</taxon>
        <taxon>Mammalia</taxon>
        <taxon>Eutheria</taxon>
        <taxon>Euarchontoglires</taxon>
        <taxon>Glires</taxon>
        <taxon>Rodentia</taxon>
        <taxon>Myomorpha</taxon>
        <taxon>Muroidea</taxon>
        <taxon>Muridae</taxon>
        <taxon>Murinae</taxon>
        <taxon>Mus</taxon>
        <taxon>Mus</taxon>
    </lineage>
</organism>
<proteinExistence type="evidence at protein level"/>
<protein>
    <recommendedName>
        <fullName>Next to BRCA1 gene 1 protein</fullName>
    </recommendedName>
    <alternativeName>
        <fullName>Membrane component chromosome 17 surface marker 2 homolog</fullName>
    </alternativeName>
    <alternativeName>
        <fullName>Neighbor of BRCA1 gene 1 protein</fullName>
    </alternativeName>
</protein>
<gene>
    <name type="primary">Nbr1</name>
    <name type="synonym">M17s2</name>
</gene>
<keyword id="KW-0963">Cytoplasm</keyword>
<keyword id="KW-0968">Cytoplasmic vesicle</keyword>
<keyword id="KW-0458">Lysosome</keyword>
<keyword id="KW-0479">Metal-binding</keyword>
<keyword id="KW-0597">Phosphoprotein</keyword>
<keyword id="KW-1185">Reference proteome</keyword>
<keyword id="KW-0832">Ubl conjugation</keyword>
<keyword id="KW-0862">Zinc</keyword>
<keyword id="KW-0863">Zinc-finger</keyword>
<accession>P97432</accession>
<accession>Q9JIH9</accession>
<sequence>MEPQVTLNVTFKNETQSFLVSDPENTTWADVEAMVKVSFDLNTIQIKYLDEENEEISINSQGEYEEALKMANIKQGNQLQMQVHEGYHVVDEALPKNVVENQAAARTGKKPLAHYSSLVRVLGSDMKTTEEPAPEQCSSAPCDTDQPQDKPPDWFTSYLEMFREQVVKETVEKLEQRLQEKLVLQKPLLSSSPTEVSMPISEETLFLPENQFSWHIACSHCQKRIVGVRYQCSLCPSYNICEDCEAGPYTHDTNHVLLKLRRPVVISSEPFFYSKYSAPRLPAALEQVRLQKQVDKNFVKAEKQRLRAEKKQRKAEVKELKKQLKLHRKIHLWNSIHGLQSPKSPLGRPESLLQSNTLMLPLQPCAPVMPTLSAAFVDENLPDGTHLQPGTKFIKHWRMKNTGNVKWNTDTKLKFMWGNLTLASTEKKDVLVPCLKAGHVGVVSVEFIAPTLEGTYTSHWRLSHKGQQFGPRVWCSIIVDPFPSSESPDNVEGDRISSSKADDFSCEQEEAFLLAEEEIPLGEVTKQTEGTGASASQKTRRAASERELYIPSVDLLTAQDLLSFELLDINIVQELERVPHNTPVDMTPCMSPLPHDSPLIEKPGLGQIQEESEGAGFKAPPDSTVSAKRKAETPASVEETEEDLSGTQFVCETVIRSLTLDAAPDHNPPCRQRSPQRELQLYSTEGQQPLVLPGFCRKDSSLKFALPEEGPRGDEREEIVHIVEEEVVEEEEEVQDEEVQSQSSASSEDYIIILPECFDTSRPLGDSMYSSALSQPGLERGAEGEPGIESGLEPTEARERLPERESQPQEQSISDILTTSQPLDTVPLVPEVAGLPAALSRSAPCGQCESSGVDSPGVDSPATMHEVPPAPDDIRGEPRGSTGLANSRQRSCDHSRHHNGSSIAGGLVKGALSVAASAYKALFSGPPVTAQPIVSEDQTTALMAHLFEMGFCDRQLNLRLLRKHNYNILQVVTELLQVNNNDWYSHRY</sequence>